<dbReference type="EC" id="2.7.7.6" evidence="1"/>
<dbReference type="EMBL" id="CP000410">
    <property type="protein sequence ID" value="ABJ53868.1"/>
    <property type="molecule type" value="Genomic_DNA"/>
</dbReference>
<dbReference type="RefSeq" id="WP_000639589.1">
    <property type="nucleotide sequence ID" value="NZ_JAMLJR010000002.1"/>
</dbReference>
<dbReference type="SMR" id="Q04MU7"/>
<dbReference type="PaxDb" id="373153-SPD_0131"/>
<dbReference type="KEGG" id="spd:SPD_0131"/>
<dbReference type="eggNOG" id="COG5503">
    <property type="taxonomic scope" value="Bacteria"/>
</dbReference>
<dbReference type="HOGENOM" id="CLU_187518_0_0_9"/>
<dbReference type="BioCyc" id="SPNE373153:G1G6V-144-MONOMER"/>
<dbReference type="Proteomes" id="UP000001452">
    <property type="component" value="Chromosome"/>
</dbReference>
<dbReference type="GO" id="GO:0000428">
    <property type="term" value="C:DNA-directed RNA polymerase complex"/>
    <property type="evidence" value="ECO:0007669"/>
    <property type="project" value="UniProtKB-KW"/>
</dbReference>
<dbReference type="GO" id="GO:0003677">
    <property type="term" value="F:DNA binding"/>
    <property type="evidence" value="ECO:0007669"/>
    <property type="project" value="UniProtKB-UniRule"/>
</dbReference>
<dbReference type="GO" id="GO:0003899">
    <property type="term" value="F:DNA-directed RNA polymerase activity"/>
    <property type="evidence" value="ECO:0007669"/>
    <property type="project" value="UniProtKB-UniRule"/>
</dbReference>
<dbReference type="GO" id="GO:0006351">
    <property type="term" value="P:DNA-templated transcription"/>
    <property type="evidence" value="ECO:0007669"/>
    <property type="project" value="UniProtKB-UniRule"/>
</dbReference>
<dbReference type="Gene3D" id="3.10.20.730">
    <property type="entry name" value="RNAP, epsilon subunit-like"/>
    <property type="match status" value="1"/>
</dbReference>
<dbReference type="HAMAP" id="MF_01553">
    <property type="entry name" value="RNApol_bact_RpoY"/>
    <property type="match status" value="1"/>
</dbReference>
<dbReference type="InterPro" id="IPR009907">
    <property type="entry name" value="RpoY"/>
</dbReference>
<dbReference type="NCBIfam" id="NF010188">
    <property type="entry name" value="PRK13667.1"/>
    <property type="match status" value="1"/>
</dbReference>
<dbReference type="Pfam" id="PF07288">
    <property type="entry name" value="RpoY"/>
    <property type="match status" value="1"/>
</dbReference>
<organism>
    <name type="scientific">Streptococcus pneumoniae serotype 2 (strain D39 / NCTC 7466)</name>
    <dbReference type="NCBI Taxonomy" id="373153"/>
    <lineage>
        <taxon>Bacteria</taxon>
        <taxon>Bacillati</taxon>
        <taxon>Bacillota</taxon>
        <taxon>Bacilli</taxon>
        <taxon>Lactobacillales</taxon>
        <taxon>Streptococcaceae</taxon>
        <taxon>Streptococcus</taxon>
    </lineage>
</organism>
<reference key="1">
    <citation type="journal article" date="2007" name="J. Bacteriol.">
        <title>Genome sequence of Avery's virulent serotype 2 strain D39 of Streptococcus pneumoniae and comparison with that of unencapsulated laboratory strain R6.</title>
        <authorList>
            <person name="Lanie J.A."/>
            <person name="Ng W.-L."/>
            <person name="Kazmierczak K.M."/>
            <person name="Andrzejewski T.M."/>
            <person name="Davidsen T.M."/>
            <person name="Wayne K.J."/>
            <person name="Tettelin H."/>
            <person name="Glass J.I."/>
            <person name="Winkler M.E."/>
        </authorList>
    </citation>
    <scope>NUCLEOTIDE SEQUENCE [LARGE SCALE GENOMIC DNA]</scope>
    <source>
        <strain>D39 / NCTC 7466</strain>
    </source>
</reference>
<name>RPOY_STRP2</name>
<protein>
    <recommendedName>
        <fullName evidence="1">DNA-directed RNA polymerase subunit epsilon</fullName>
        <shortName evidence="1">RNAP epsilon subunit</shortName>
        <ecNumber evidence="1">2.7.7.6</ecNumber>
    </recommendedName>
    <alternativeName>
        <fullName evidence="1">RNA polymerase epsilon subunit</fullName>
    </alternativeName>
    <alternativeName>
        <fullName evidence="1">Transcriptase subunit epsilon</fullName>
    </alternativeName>
</protein>
<feature type="chain" id="PRO_1000068879" description="DNA-directed RNA polymerase subunit epsilon">
    <location>
        <begin position="1"/>
        <end position="77"/>
    </location>
</feature>
<sequence length="77" mass="9288">MIYKVFYQETKERSPRRETTRTLYLDIDASSELEGRITARQLVEENRPEYNIEYIELLSDKLLDYEKETGAFEITEF</sequence>
<comment type="function">
    <text evidence="1">A non-essential component of RNA polymerase (RNAP).</text>
</comment>
<comment type="catalytic activity">
    <reaction evidence="1">
        <text>RNA(n) + a ribonucleoside 5'-triphosphate = RNA(n+1) + diphosphate</text>
        <dbReference type="Rhea" id="RHEA:21248"/>
        <dbReference type="Rhea" id="RHEA-COMP:14527"/>
        <dbReference type="Rhea" id="RHEA-COMP:17342"/>
        <dbReference type="ChEBI" id="CHEBI:33019"/>
        <dbReference type="ChEBI" id="CHEBI:61557"/>
        <dbReference type="ChEBI" id="CHEBI:140395"/>
        <dbReference type="EC" id="2.7.7.6"/>
    </reaction>
</comment>
<comment type="subunit">
    <text evidence="1">RNAP is composed of a core of 2 alpha, a beta and a beta' subunit. The core is associated with a delta subunit, and at least one of epsilon or omega. When a sigma factor is associated with the core the holoenzyme is formed, which can initiate transcription.</text>
</comment>
<comment type="similarity">
    <text evidence="1">Belongs to the RNA polymerase subunit epsilon family.</text>
</comment>
<evidence type="ECO:0000255" key="1">
    <source>
        <dbReference type="HAMAP-Rule" id="MF_01553"/>
    </source>
</evidence>
<gene>
    <name evidence="1" type="primary">rpoY</name>
    <name type="ordered locus">SPD_0131</name>
</gene>
<accession>Q04MU7</accession>
<proteinExistence type="inferred from homology"/>
<keyword id="KW-0240">DNA-directed RNA polymerase</keyword>
<keyword id="KW-0548">Nucleotidyltransferase</keyword>
<keyword id="KW-1185">Reference proteome</keyword>
<keyword id="KW-0804">Transcription</keyword>
<keyword id="KW-0808">Transferase</keyword>